<gene>
    <name evidence="1" type="primary">ulaD</name>
    <name type="ordered locus">ECIAI39_4661</name>
</gene>
<evidence type="ECO:0000255" key="1">
    <source>
        <dbReference type="HAMAP-Rule" id="MF_01267"/>
    </source>
</evidence>
<protein>
    <recommendedName>
        <fullName evidence="1">3-keto-L-gulonate-6-phosphate decarboxylase UlaD</fullName>
        <ecNumber evidence="1">4.1.1.85</ecNumber>
    </recommendedName>
    <alternativeName>
        <fullName evidence="1">3-dehydro-L-gulonate-6-phosphate decarboxylase</fullName>
    </alternativeName>
    <alternativeName>
        <fullName evidence="1">KGPDC</fullName>
    </alternativeName>
    <alternativeName>
        <fullName evidence="1">L-ascorbate utilization protein D</fullName>
    </alternativeName>
</protein>
<feature type="chain" id="PRO_1000140111" description="3-keto-L-gulonate-6-phosphate decarboxylase UlaD">
    <location>
        <begin position="1"/>
        <end position="216"/>
    </location>
</feature>
<feature type="binding site" evidence="1">
    <location>
        <position position="11"/>
    </location>
    <ligand>
        <name>substrate</name>
    </ligand>
</feature>
<feature type="binding site" evidence="1">
    <location>
        <position position="33"/>
    </location>
    <ligand>
        <name>Mg(2+)</name>
        <dbReference type="ChEBI" id="CHEBI:18420"/>
    </ligand>
</feature>
<feature type="binding site" evidence="1">
    <location>
        <position position="62"/>
    </location>
    <ligand>
        <name>Mg(2+)</name>
        <dbReference type="ChEBI" id="CHEBI:18420"/>
    </ligand>
</feature>
<feature type="binding site" evidence="1">
    <location>
        <position position="192"/>
    </location>
    <ligand>
        <name>substrate</name>
    </ligand>
</feature>
<feature type="site" description="Transition state stabilizer" evidence="1">
    <location>
        <position position="64"/>
    </location>
</feature>
<feature type="site" description="Transition state stabilizer" evidence="1">
    <location>
        <position position="67"/>
    </location>
</feature>
<name>ULAD_ECO7I</name>
<comment type="function">
    <text evidence="1">Catalyzes the decarboxylation of 3-keto-L-gulonate-6-P into L-xylulose-5-P. Is involved in the anaerobic L-ascorbate utilization.</text>
</comment>
<comment type="catalytic activity">
    <reaction evidence="1">
        <text>3-dehydro-L-gulonate 6-phosphate + H(+) = L-xylulose 5-phosphate + CO2</text>
        <dbReference type="Rhea" id="RHEA:14353"/>
        <dbReference type="ChEBI" id="CHEBI:15378"/>
        <dbReference type="ChEBI" id="CHEBI:16526"/>
        <dbReference type="ChEBI" id="CHEBI:57829"/>
        <dbReference type="ChEBI" id="CHEBI:58774"/>
        <dbReference type="EC" id="4.1.1.85"/>
    </reaction>
</comment>
<comment type="cofactor">
    <cofactor evidence="1">
        <name>Mg(2+)</name>
        <dbReference type="ChEBI" id="CHEBI:18420"/>
    </cofactor>
    <text evidence="1">Binds 1 Mg(2+) ion per subunit.</text>
</comment>
<comment type="pathway">
    <text evidence="1">Cofactor degradation; L-ascorbate degradation; D-xylulose 5-phosphate from L-ascorbate: step 2/4.</text>
</comment>
<comment type="subunit">
    <text evidence="1">Homodimer.</text>
</comment>
<comment type="induction">
    <text evidence="1">Induced by L-ascorbate. Repressed by UlaR.</text>
</comment>
<comment type="similarity">
    <text evidence="1">Belongs to the HPS/KGPDC family. KGPDC subfamily.</text>
</comment>
<proteinExistence type="inferred from homology"/>
<sequence length="216" mass="23649">MSLPMLQVALDNQTMDSAYETTRLIAEEVDIIEVGTILCVGEGVRAVRDLKALYPHKIVLADAKIADAGKILSRMCFEANADWVTVICCADINTAKGALDVAKEFNGDVQIELTGYWTWEQAQQWRDAGIQQVVYHRSRDAQAAGVAWGEADITAIKRLSDMGFKVTVTGGLALEDLPLFKGIPIHVFIAGRSIRDAASPVEAARQFKRSIAELWG</sequence>
<keyword id="KW-0119">Carbohydrate metabolism</keyword>
<keyword id="KW-0210">Decarboxylase</keyword>
<keyword id="KW-0456">Lyase</keyword>
<keyword id="KW-0460">Magnesium</keyword>
<keyword id="KW-0479">Metal-binding</keyword>
<dbReference type="EC" id="4.1.1.85" evidence="1"/>
<dbReference type="EMBL" id="CU928164">
    <property type="protein sequence ID" value="CAR20759.1"/>
    <property type="molecule type" value="Genomic_DNA"/>
</dbReference>
<dbReference type="RefSeq" id="WP_000056760.1">
    <property type="nucleotide sequence ID" value="NC_011750.1"/>
</dbReference>
<dbReference type="RefSeq" id="YP_002410522.1">
    <property type="nucleotide sequence ID" value="NC_011750.1"/>
</dbReference>
<dbReference type="SMR" id="B7NTQ2"/>
<dbReference type="STRING" id="585057.ECIAI39_4661"/>
<dbReference type="GeneID" id="75202430"/>
<dbReference type="KEGG" id="ect:ECIAI39_4661"/>
<dbReference type="PATRIC" id="fig|585057.6.peg.4808"/>
<dbReference type="HOGENOM" id="CLU_081825_0_0_6"/>
<dbReference type="UniPathway" id="UPA00263">
    <property type="reaction ID" value="UER00378"/>
</dbReference>
<dbReference type="Proteomes" id="UP000000749">
    <property type="component" value="Chromosome"/>
</dbReference>
<dbReference type="GO" id="GO:0033982">
    <property type="term" value="F:3-dehydro-L-gulonate-6-phosphate decarboxylase activity"/>
    <property type="evidence" value="ECO:0007669"/>
    <property type="project" value="UniProtKB-EC"/>
</dbReference>
<dbReference type="GO" id="GO:0000287">
    <property type="term" value="F:magnesium ion binding"/>
    <property type="evidence" value="ECO:0007669"/>
    <property type="project" value="UniProtKB-UniRule"/>
</dbReference>
<dbReference type="GO" id="GO:0004590">
    <property type="term" value="F:orotidine-5'-phosphate decarboxylase activity"/>
    <property type="evidence" value="ECO:0007669"/>
    <property type="project" value="InterPro"/>
</dbReference>
<dbReference type="GO" id="GO:0006207">
    <property type="term" value="P:'de novo' pyrimidine nucleobase biosynthetic process"/>
    <property type="evidence" value="ECO:0007669"/>
    <property type="project" value="InterPro"/>
</dbReference>
<dbReference type="GO" id="GO:0019854">
    <property type="term" value="P:L-ascorbic acid catabolic process"/>
    <property type="evidence" value="ECO:0007669"/>
    <property type="project" value="UniProtKB-UniRule"/>
</dbReference>
<dbReference type="CDD" id="cd04726">
    <property type="entry name" value="KGPDC_HPS"/>
    <property type="match status" value="1"/>
</dbReference>
<dbReference type="FunFam" id="3.20.20.70:FF:000022">
    <property type="entry name" value="3-keto-L-gulonate-6-phosphate decarboxylase UlaD"/>
    <property type="match status" value="1"/>
</dbReference>
<dbReference type="Gene3D" id="3.20.20.70">
    <property type="entry name" value="Aldolase class I"/>
    <property type="match status" value="1"/>
</dbReference>
<dbReference type="HAMAP" id="MF_01267">
    <property type="entry name" value="UlaD"/>
    <property type="match status" value="1"/>
</dbReference>
<dbReference type="InterPro" id="IPR023942">
    <property type="entry name" value="3-keto-L-gulonate6Pdecase_UlaD"/>
</dbReference>
<dbReference type="InterPro" id="IPR013785">
    <property type="entry name" value="Aldolase_TIM"/>
</dbReference>
<dbReference type="InterPro" id="IPR041710">
    <property type="entry name" value="HPS/KGPDC"/>
</dbReference>
<dbReference type="InterPro" id="IPR001754">
    <property type="entry name" value="OMPdeCOase_dom"/>
</dbReference>
<dbReference type="InterPro" id="IPR011060">
    <property type="entry name" value="RibuloseP-bd_barrel"/>
</dbReference>
<dbReference type="NCBIfam" id="NF009832">
    <property type="entry name" value="PRK13306.1"/>
    <property type="match status" value="1"/>
</dbReference>
<dbReference type="PANTHER" id="PTHR35039">
    <property type="entry name" value="3-KETO-L-GULONATE-6-PHOSPHATE DECARBOXYLASE SGBH-RELATED"/>
    <property type="match status" value="1"/>
</dbReference>
<dbReference type="PANTHER" id="PTHR35039:SF3">
    <property type="entry name" value="3-KETO-L-GULONATE-6-PHOSPHATE DECARBOXYLASE SGBH-RELATED"/>
    <property type="match status" value="1"/>
</dbReference>
<dbReference type="Pfam" id="PF00215">
    <property type="entry name" value="OMPdecase"/>
    <property type="match status" value="1"/>
</dbReference>
<dbReference type="SMART" id="SM00934">
    <property type="entry name" value="OMPdecase"/>
    <property type="match status" value="1"/>
</dbReference>
<dbReference type="SUPFAM" id="SSF51366">
    <property type="entry name" value="Ribulose-phoshate binding barrel"/>
    <property type="match status" value="1"/>
</dbReference>
<reference key="1">
    <citation type="journal article" date="2009" name="PLoS Genet.">
        <title>Organised genome dynamics in the Escherichia coli species results in highly diverse adaptive paths.</title>
        <authorList>
            <person name="Touchon M."/>
            <person name="Hoede C."/>
            <person name="Tenaillon O."/>
            <person name="Barbe V."/>
            <person name="Baeriswyl S."/>
            <person name="Bidet P."/>
            <person name="Bingen E."/>
            <person name="Bonacorsi S."/>
            <person name="Bouchier C."/>
            <person name="Bouvet O."/>
            <person name="Calteau A."/>
            <person name="Chiapello H."/>
            <person name="Clermont O."/>
            <person name="Cruveiller S."/>
            <person name="Danchin A."/>
            <person name="Diard M."/>
            <person name="Dossat C."/>
            <person name="Karoui M.E."/>
            <person name="Frapy E."/>
            <person name="Garry L."/>
            <person name="Ghigo J.M."/>
            <person name="Gilles A.M."/>
            <person name="Johnson J."/>
            <person name="Le Bouguenec C."/>
            <person name="Lescat M."/>
            <person name="Mangenot S."/>
            <person name="Martinez-Jehanne V."/>
            <person name="Matic I."/>
            <person name="Nassif X."/>
            <person name="Oztas S."/>
            <person name="Petit M.A."/>
            <person name="Pichon C."/>
            <person name="Rouy Z."/>
            <person name="Ruf C.S."/>
            <person name="Schneider D."/>
            <person name="Tourret J."/>
            <person name="Vacherie B."/>
            <person name="Vallenet D."/>
            <person name="Medigue C."/>
            <person name="Rocha E.P.C."/>
            <person name="Denamur E."/>
        </authorList>
    </citation>
    <scope>NUCLEOTIDE SEQUENCE [LARGE SCALE GENOMIC DNA]</scope>
    <source>
        <strain>IAI39 / ExPEC</strain>
    </source>
</reference>
<organism>
    <name type="scientific">Escherichia coli O7:K1 (strain IAI39 / ExPEC)</name>
    <dbReference type="NCBI Taxonomy" id="585057"/>
    <lineage>
        <taxon>Bacteria</taxon>
        <taxon>Pseudomonadati</taxon>
        <taxon>Pseudomonadota</taxon>
        <taxon>Gammaproteobacteria</taxon>
        <taxon>Enterobacterales</taxon>
        <taxon>Enterobacteriaceae</taxon>
        <taxon>Escherichia</taxon>
    </lineage>
</organism>
<accession>B7NTQ2</accession>